<sequence length="117" mass="13207">MKTVILFSFLLVLLGYLGAGHAQRDPEFTSRARQMLAVFGNSEVDRYTKSRNLPALIEFYEKYSSRLPLTVQDRNFANNVVRRYRAQNNQQVDGVPAQGGIGLAFALLLPFAKAIRE</sequence>
<name>TOTF_DROSE</name>
<protein>
    <recommendedName>
        <fullName>Protein Turandot F</fullName>
    </recommendedName>
</protein>
<dbReference type="EMBL" id="CH480822">
    <property type="protein sequence ID" value="EDW55814.1"/>
    <property type="molecule type" value="Genomic_DNA"/>
</dbReference>
<dbReference type="RefSeq" id="XP_002039168.1">
    <property type="nucleotide sequence ID" value="XM_002039132.1"/>
</dbReference>
<dbReference type="SMR" id="B4I608"/>
<dbReference type="STRING" id="7238.B4I608"/>
<dbReference type="EnsemblMetazoa" id="FBtr0199966">
    <property type="protein sequence ID" value="FBpp0198458"/>
    <property type="gene ID" value="FBgn0171894"/>
</dbReference>
<dbReference type="EnsemblMetazoa" id="XM_032714018.1">
    <property type="protein sequence ID" value="XP_032569909.1"/>
    <property type="gene ID" value="LOC6614749"/>
</dbReference>
<dbReference type="HOGENOM" id="CLU_158853_0_0_1"/>
<dbReference type="OMA" id="VCSANAQ"/>
<dbReference type="PhylomeDB" id="B4I608"/>
<dbReference type="Proteomes" id="UP000001292">
    <property type="component" value="Unassembled WGS sequence"/>
</dbReference>
<dbReference type="GO" id="GO:0005615">
    <property type="term" value="C:extracellular space"/>
    <property type="evidence" value="ECO:0000250"/>
    <property type="project" value="UniProtKB"/>
</dbReference>
<dbReference type="GO" id="GO:0034605">
    <property type="term" value="P:cellular response to heat"/>
    <property type="evidence" value="ECO:0007669"/>
    <property type="project" value="EnsemblMetazoa"/>
</dbReference>
<dbReference type="GO" id="GO:0034644">
    <property type="term" value="P:cellular response to UV"/>
    <property type="evidence" value="ECO:0007669"/>
    <property type="project" value="EnsemblMetazoa"/>
</dbReference>
<dbReference type="GO" id="GO:0045087">
    <property type="term" value="P:innate immune response"/>
    <property type="evidence" value="ECO:0007669"/>
    <property type="project" value="UniProtKB-KW"/>
</dbReference>
<dbReference type="GO" id="GO:0009617">
    <property type="term" value="P:response to bacterium"/>
    <property type="evidence" value="ECO:0000250"/>
    <property type="project" value="UniProtKB"/>
</dbReference>
<dbReference type="GO" id="GO:0009408">
    <property type="term" value="P:response to heat"/>
    <property type="evidence" value="ECO:0000250"/>
    <property type="project" value="UniProtKB"/>
</dbReference>
<dbReference type="GO" id="GO:0009411">
    <property type="term" value="P:response to UV"/>
    <property type="evidence" value="ECO:0000250"/>
    <property type="project" value="UniProtKB"/>
</dbReference>
<dbReference type="GO" id="GO:0009615">
    <property type="term" value="P:response to virus"/>
    <property type="evidence" value="ECO:0007669"/>
    <property type="project" value="EnsemblMetazoa"/>
</dbReference>
<dbReference type="InterPro" id="IPR010825">
    <property type="entry name" value="Turandot"/>
</dbReference>
<dbReference type="Pfam" id="PF07240">
    <property type="entry name" value="Turandot"/>
    <property type="match status" value="1"/>
</dbReference>
<reference evidence="3" key="1">
    <citation type="journal article" date="2007" name="Nature">
        <title>Evolution of genes and genomes on the Drosophila phylogeny.</title>
        <authorList>
            <consortium name="Drosophila 12 genomes consortium"/>
        </authorList>
    </citation>
    <scope>NUCLEOTIDE SEQUENCE [LARGE SCALE GENOMIC DNA]</scope>
    <source>
        <strain evidence="3">Rob3c / Tucson 14021-0248.25</strain>
    </source>
</reference>
<accession>B4I608</accession>
<comment type="function">
    <text evidence="1">A humoral factor that may play a role in stress tolerance.</text>
</comment>
<comment type="subcellular location">
    <subcellularLocation>
        <location evidence="1">Secreted</location>
    </subcellularLocation>
</comment>
<comment type="similarity">
    <text evidence="2">Belongs to the Turandot family.</text>
</comment>
<feature type="signal peptide" evidence="2">
    <location>
        <begin position="1"/>
        <end position="22"/>
    </location>
</feature>
<feature type="chain" id="PRO_0000354993" description="Protein Turandot F">
    <location>
        <begin position="23"/>
        <end position="117"/>
    </location>
</feature>
<keyword id="KW-0391">Immunity</keyword>
<keyword id="KW-0399">Innate immunity</keyword>
<keyword id="KW-1185">Reference proteome</keyword>
<keyword id="KW-0964">Secreted</keyword>
<keyword id="KW-0732">Signal</keyword>
<organism>
    <name type="scientific">Drosophila sechellia</name>
    <name type="common">Fruit fly</name>
    <dbReference type="NCBI Taxonomy" id="7238"/>
    <lineage>
        <taxon>Eukaryota</taxon>
        <taxon>Metazoa</taxon>
        <taxon>Ecdysozoa</taxon>
        <taxon>Arthropoda</taxon>
        <taxon>Hexapoda</taxon>
        <taxon>Insecta</taxon>
        <taxon>Pterygota</taxon>
        <taxon>Neoptera</taxon>
        <taxon>Endopterygota</taxon>
        <taxon>Diptera</taxon>
        <taxon>Brachycera</taxon>
        <taxon>Muscomorpha</taxon>
        <taxon>Ephydroidea</taxon>
        <taxon>Drosophilidae</taxon>
        <taxon>Drosophila</taxon>
        <taxon>Sophophora</taxon>
    </lineage>
</organism>
<proteinExistence type="inferred from homology"/>
<evidence type="ECO:0000250" key="1">
    <source>
        <dbReference type="UniProtKB" id="Q9VIR2"/>
    </source>
</evidence>
<evidence type="ECO:0000255" key="2"/>
<evidence type="ECO:0000312" key="3">
    <source>
        <dbReference type="EMBL" id="EDW55814.1"/>
    </source>
</evidence>
<gene>
    <name evidence="3" type="primary">TotF</name>
    <name type="ORF">GM16981</name>
</gene>